<organism>
    <name type="scientific">Vibrio parahaemolyticus serotype O3:K6 (strain RIMD 2210633)</name>
    <dbReference type="NCBI Taxonomy" id="223926"/>
    <lineage>
        <taxon>Bacteria</taxon>
        <taxon>Pseudomonadati</taxon>
        <taxon>Pseudomonadota</taxon>
        <taxon>Gammaproteobacteria</taxon>
        <taxon>Vibrionales</taxon>
        <taxon>Vibrionaceae</taxon>
        <taxon>Vibrio</taxon>
    </lineage>
</organism>
<accession>Q87LR2</accession>
<comment type="function">
    <text evidence="1">Modulates RecA activity.</text>
</comment>
<comment type="subcellular location">
    <subcellularLocation>
        <location evidence="1">Cytoplasm</location>
    </subcellularLocation>
</comment>
<comment type="similarity">
    <text evidence="1">Belongs to the RecX family.</text>
</comment>
<protein>
    <recommendedName>
        <fullName evidence="1">Regulatory protein RecX</fullName>
    </recommendedName>
</protein>
<reference key="1">
    <citation type="journal article" date="2003" name="Lancet">
        <title>Genome sequence of Vibrio parahaemolyticus: a pathogenic mechanism distinct from that of V. cholerae.</title>
        <authorList>
            <person name="Makino K."/>
            <person name="Oshima K."/>
            <person name="Kurokawa K."/>
            <person name="Yokoyama K."/>
            <person name="Uda T."/>
            <person name="Tagomori K."/>
            <person name="Iijima Y."/>
            <person name="Najima M."/>
            <person name="Nakano M."/>
            <person name="Yamashita A."/>
            <person name="Kubota Y."/>
            <person name="Kimura S."/>
            <person name="Yasunaga T."/>
            <person name="Honda T."/>
            <person name="Shinagawa H."/>
            <person name="Hattori M."/>
            <person name="Iida T."/>
        </authorList>
    </citation>
    <scope>NUCLEOTIDE SEQUENCE [LARGE SCALE GENOMIC DNA]</scope>
    <source>
        <strain>RIMD 2210633</strain>
    </source>
</reference>
<sequence>MYQKRQAPTLSSKEAAIQLLSRRDHGLYELHQKLAMKGYEEADIEAAINFCLEHNYLDDLRYAKSQVRQHVYKGHGERRIRQELNQKRVAESVIEQAMAEEPQDWFELAKLAAEKKFKGIKAKDQKEYAKQVRFLQYRGYSFDQISYALSFEDED</sequence>
<proteinExistence type="inferred from homology"/>
<name>RECX_VIBPA</name>
<evidence type="ECO:0000255" key="1">
    <source>
        <dbReference type="HAMAP-Rule" id="MF_01114"/>
    </source>
</evidence>
<feature type="chain" id="PRO_0000162492" description="Regulatory protein RecX">
    <location>
        <begin position="1"/>
        <end position="155"/>
    </location>
</feature>
<gene>
    <name evidence="1" type="primary">recX</name>
    <name type="ordered locus">VP2549</name>
</gene>
<dbReference type="EMBL" id="BA000031">
    <property type="protein sequence ID" value="BAC60812.1"/>
    <property type="molecule type" value="Genomic_DNA"/>
</dbReference>
<dbReference type="RefSeq" id="NP_798928.1">
    <property type="nucleotide sequence ID" value="NC_004603.1"/>
</dbReference>
<dbReference type="RefSeq" id="WP_005455548.1">
    <property type="nucleotide sequence ID" value="NC_004603.1"/>
</dbReference>
<dbReference type="SMR" id="Q87LR2"/>
<dbReference type="GeneID" id="1190073"/>
<dbReference type="KEGG" id="vpa:VP2549"/>
<dbReference type="PATRIC" id="fig|223926.6.peg.2447"/>
<dbReference type="eggNOG" id="COG2137">
    <property type="taxonomic scope" value="Bacteria"/>
</dbReference>
<dbReference type="HOGENOM" id="CLU_066607_3_2_6"/>
<dbReference type="Proteomes" id="UP000002493">
    <property type="component" value="Chromosome 1"/>
</dbReference>
<dbReference type="GO" id="GO:0005737">
    <property type="term" value="C:cytoplasm"/>
    <property type="evidence" value="ECO:0007669"/>
    <property type="project" value="UniProtKB-SubCell"/>
</dbReference>
<dbReference type="GO" id="GO:0006282">
    <property type="term" value="P:regulation of DNA repair"/>
    <property type="evidence" value="ECO:0007669"/>
    <property type="project" value="UniProtKB-UniRule"/>
</dbReference>
<dbReference type="Gene3D" id="1.10.10.10">
    <property type="entry name" value="Winged helix-like DNA-binding domain superfamily/Winged helix DNA-binding domain"/>
    <property type="match status" value="3"/>
</dbReference>
<dbReference type="HAMAP" id="MF_01114">
    <property type="entry name" value="RecX"/>
    <property type="match status" value="1"/>
</dbReference>
<dbReference type="InterPro" id="IPR053926">
    <property type="entry name" value="RecX_HTH_1st"/>
</dbReference>
<dbReference type="InterPro" id="IPR053924">
    <property type="entry name" value="RecX_HTH_2nd"/>
</dbReference>
<dbReference type="InterPro" id="IPR053925">
    <property type="entry name" value="RecX_HTH_3rd"/>
</dbReference>
<dbReference type="InterPro" id="IPR003783">
    <property type="entry name" value="Regulatory_RecX"/>
</dbReference>
<dbReference type="InterPro" id="IPR036388">
    <property type="entry name" value="WH-like_DNA-bd_sf"/>
</dbReference>
<dbReference type="NCBIfam" id="NF001057">
    <property type="entry name" value="PRK00117.3-3"/>
    <property type="match status" value="1"/>
</dbReference>
<dbReference type="PANTHER" id="PTHR33602">
    <property type="entry name" value="REGULATORY PROTEIN RECX FAMILY PROTEIN"/>
    <property type="match status" value="1"/>
</dbReference>
<dbReference type="PANTHER" id="PTHR33602:SF1">
    <property type="entry name" value="REGULATORY PROTEIN RECX FAMILY PROTEIN"/>
    <property type="match status" value="1"/>
</dbReference>
<dbReference type="Pfam" id="PF21982">
    <property type="entry name" value="RecX_HTH1"/>
    <property type="match status" value="1"/>
</dbReference>
<dbReference type="Pfam" id="PF02631">
    <property type="entry name" value="RecX_HTH2"/>
    <property type="match status" value="1"/>
</dbReference>
<dbReference type="Pfam" id="PF21981">
    <property type="entry name" value="RecX_HTH3"/>
    <property type="match status" value="1"/>
</dbReference>
<keyword id="KW-0963">Cytoplasm</keyword>